<gene>
    <name type="primary">RpLP0</name>
    <name type="synonym">AP3</name>
    <name type="synonym">Ape</name>
    <name type="synonym">RpP0</name>
    <name type="ORF">CG7490</name>
</gene>
<proteinExistence type="evidence at protein level"/>
<dbReference type="EC" id="3.1.-.-" evidence="5"/>
<dbReference type="EMBL" id="M25772">
    <property type="protein sequence ID" value="AAA53372.1"/>
    <property type="molecule type" value="mRNA"/>
</dbReference>
<dbReference type="EMBL" id="AE014296">
    <property type="protein sequence ID" value="AAF51807.1"/>
    <property type="molecule type" value="Genomic_DNA"/>
</dbReference>
<dbReference type="EMBL" id="AY075528">
    <property type="protein sequence ID" value="AAL68335.1"/>
    <property type="molecule type" value="mRNA"/>
</dbReference>
<dbReference type="EMBL" id="BT021447">
    <property type="protein sequence ID" value="AAX33595.1"/>
    <property type="molecule type" value="mRNA"/>
</dbReference>
<dbReference type="PIR" id="A30223">
    <property type="entry name" value="R5FFP0"/>
</dbReference>
<dbReference type="RefSeq" id="NP_001262202.1">
    <property type="nucleotide sequence ID" value="NM_001275273.1"/>
</dbReference>
<dbReference type="RefSeq" id="NP_524211.1">
    <property type="nucleotide sequence ID" value="NM_079487.4"/>
</dbReference>
<dbReference type="SMR" id="P19889"/>
<dbReference type="BioGRID" id="65690">
    <property type="interactions" value="113"/>
</dbReference>
<dbReference type="DIP" id="DIP-21968N"/>
<dbReference type="FunCoup" id="P19889">
    <property type="interactions" value="1723"/>
</dbReference>
<dbReference type="IntAct" id="P19889">
    <property type="interactions" value="54"/>
</dbReference>
<dbReference type="MINT" id="P19889"/>
<dbReference type="STRING" id="7227.FBpp0306232"/>
<dbReference type="MoonProt" id="P19889"/>
<dbReference type="iPTMnet" id="P19889"/>
<dbReference type="PaxDb" id="7227-FBpp0306232"/>
<dbReference type="DNASU" id="40451"/>
<dbReference type="EnsemblMetazoa" id="FBtr0078481">
    <property type="protein sequence ID" value="FBpp0078134"/>
    <property type="gene ID" value="FBgn0000100"/>
</dbReference>
<dbReference type="EnsemblMetazoa" id="FBtr0334113">
    <property type="protein sequence ID" value="FBpp0306232"/>
    <property type="gene ID" value="FBgn0000100"/>
</dbReference>
<dbReference type="GeneID" id="40451"/>
<dbReference type="KEGG" id="dme:Dmel_CG7490"/>
<dbReference type="AGR" id="FB:FBgn0000100"/>
<dbReference type="CTD" id="6175"/>
<dbReference type="FlyBase" id="FBgn0000100">
    <property type="gene designation" value="RpLP0"/>
</dbReference>
<dbReference type="VEuPathDB" id="VectorBase:FBgn0000100"/>
<dbReference type="eggNOG" id="KOG0815">
    <property type="taxonomic scope" value="Eukaryota"/>
</dbReference>
<dbReference type="GeneTree" id="ENSGT00390000017839"/>
<dbReference type="HOGENOM" id="CLU_053173_1_1_1"/>
<dbReference type="InParanoid" id="P19889"/>
<dbReference type="OMA" id="DMNPFKL"/>
<dbReference type="OrthoDB" id="10259902at2759"/>
<dbReference type="PhylomeDB" id="P19889"/>
<dbReference type="Reactome" id="R-DME-156827">
    <property type="pathway name" value="L13a-mediated translational silencing of Ceruloplasmin expression"/>
</dbReference>
<dbReference type="Reactome" id="R-DME-1799339">
    <property type="pathway name" value="SRP-dependent cotranslational protein targeting to membrane"/>
</dbReference>
<dbReference type="Reactome" id="R-DME-72689">
    <property type="pathway name" value="Formation of a pool of free 40S subunits"/>
</dbReference>
<dbReference type="Reactome" id="R-DME-72706">
    <property type="pathway name" value="GTP hydrolysis and joining of the 60S ribosomal subunit"/>
</dbReference>
<dbReference type="Reactome" id="R-DME-975956">
    <property type="pathway name" value="Nonsense Mediated Decay (NMD) independent of the Exon Junction Complex (EJC)"/>
</dbReference>
<dbReference type="Reactome" id="R-DME-975957">
    <property type="pathway name" value="Nonsense Mediated Decay (NMD) enhanced by the Exon Junction Complex (EJC)"/>
</dbReference>
<dbReference type="SignaLink" id="P19889"/>
<dbReference type="BioGRID-ORCS" id="40451">
    <property type="hits" value="1 hit in 3 CRISPR screens"/>
</dbReference>
<dbReference type="GenomeRNAi" id="40451"/>
<dbReference type="PRO" id="PR:P19889"/>
<dbReference type="Proteomes" id="UP000000803">
    <property type="component" value="Chromosome 3L"/>
</dbReference>
<dbReference type="Bgee" id="FBgn0000100">
    <property type="expression patterns" value="Expressed in egg cell and 289 other cell types or tissues"/>
</dbReference>
<dbReference type="ExpressionAtlas" id="P19889">
    <property type="expression patterns" value="baseline and differential"/>
</dbReference>
<dbReference type="GO" id="GO:0005829">
    <property type="term" value="C:cytosol"/>
    <property type="evidence" value="ECO:0000314"/>
    <property type="project" value="CAFA"/>
</dbReference>
<dbReference type="GO" id="GO:0022625">
    <property type="term" value="C:cytosolic large ribosomal subunit"/>
    <property type="evidence" value="ECO:0000318"/>
    <property type="project" value="GO_Central"/>
</dbReference>
<dbReference type="GO" id="GO:0022626">
    <property type="term" value="C:cytosolic ribosome"/>
    <property type="evidence" value="ECO:0000314"/>
    <property type="project" value="FlyBase"/>
</dbReference>
<dbReference type="GO" id="GO:0016363">
    <property type="term" value="C:nuclear matrix"/>
    <property type="evidence" value="ECO:0000314"/>
    <property type="project" value="CAFA"/>
</dbReference>
<dbReference type="GO" id="GO:0005654">
    <property type="term" value="C:nucleoplasm"/>
    <property type="evidence" value="ECO:0000314"/>
    <property type="project" value="CAFA"/>
</dbReference>
<dbReference type="GO" id="GO:0005840">
    <property type="term" value="C:ribosome"/>
    <property type="evidence" value="ECO:0000314"/>
    <property type="project" value="CAFA"/>
</dbReference>
<dbReference type="GO" id="GO:0005509">
    <property type="term" value="F:calcium ion binding"/>
    <property type="evidence" value="ECO:0000314"/>
    <property type="project" value="CAFA"/>
</dbReference>
<dbReference type="GO" id="GO:0052720">
    <property type="term" value="F:class II DNA-(apurinic or apyrimidinic site) endonuclease activity"/>
    <property type="evidence" value="ECO:0000314"/>
    <property type="project" value="FlyBase"/>
</dbReference>
<dbReference type="GO" id="GO:0070180">
    <property type="term" value="F:large ribosomal subunit rRNA binding"/>
    <property type="evidence" value="ECO:0000318"/>
    <property type="project" value="GO_Central"/>
</dbReference>
<dbReference type="GO" id="GO:0000287">
    <property type="term" value="F:magnesium ion binding"/>
    <property type="evidence" value="ECO:0000314"/>
    <property type="project" value="CAFA"/>
</dbReference>
<dbReference type="GO" id="GO:0003735">
    <property type="term" value="F:structural constituent of ribosome"/>
    <property type="evidence" value="ECO:0000314"/>
    <property type="project" value="FlyBase"/>
</dbReference>
<dbReference type="GO" id="GO:0006284">
    <property type="term" value="P:base-excision repair"/>
    <property type="evidence" value="ECO:0000314"/>
    <property type="project" value="CAFA"/>
</dbReference>
<dbReference type="GO" id="GO:0002181">
    <property type="term" value="P:cytoplasmic translation"/>
    <property type="evidence" value="ECO:0000318"/>
    <property type="project" value="GO_Central"/>
</dbReference>
<dbReference type="GO" id="GO:0090304">
    <property type="term" value="P:nucleic acid metabolic process"/>
    <property type="evidence" value="ECO:0000314"/>
    <property type="project" value="CAFA"/>
</dbReference>
<dbReference type="GO" id="GO:0042254">
    <property type="term" value="P:ribosome biogenesis"/>
    <property type="evidence" value="ECO:0007669"/>
    <property type="project" value="InterPro"/>
</dbReference>
<dbReference type="CDD" id="cd05795">
    <property type="entry name" value="Ribosomal_P0_L10e"/>
    <property type="match status" value="1"/>
</dbReference>
<dbReference type="FunFam" id="3.30.70.1730:FF:000002">
    <property type="entry name" value="60S acidic ribosomal protein P0"/>
    <property type="match status" value="1"/>
</dbReference>
<dbReference type="FunFam" id="3.90.105.20:FF:000001">
    <property type="entry name" value="60S acidic ribosomal protein P0"/>
    <property type="match status" value="1"/>
</dbReference>
<dbReference type="Gene3D" id="3.30.70.1730">
    <property type="match status" value="1"/>
</dbReference>
<dbReference type="Gene3D" id="3.90.105.20">
    <property type="match status" value="1"/>
</dbReference>
<dbReference type="InterPro" id="IPR050323">
    <property type="entry name" value="Ribosomal_protein_uL10"/>
</dbReference>
<dbReference type="InterPro" id="IPR001790">
    <property type="entry name" value="Ribosomal_uL10"/>
</dbReference>
<dbReference type="InterPro" id="IPR040637">
    <property type="entry name" value="Ribosomal_uL10-like_insert"/>
</dbReference>
<dbReference type="InterPro" id="IPR043164">
    <property type="entry name" value="Ribosomal_uL10-like_insert_sf"/>
</dbReference>
<dbReference type="InterPro" id="IPR043141">
    <property type="entry name" value="Ribosomal_uL10-like_sf"/>
</dbReference>
<dbReference type="InterPro" id="IPR030670">
    <property type="entry name" value="uL10_eukaryotes"/>
</dbReference>
<dbReference type="PANTHER" id="PTHR45699">
    <property type="entry name" value="60S ACIDIC RIBOSOMAL PROTEIN P0"/>
    <property type="match status" value="1"/>
</dbReference>
<dbReference type="PANTHER" id="PTHR45699:SF3">
    <property type="entry name" value="LARGE RIBOSOMAL SUBUNIT PROTEIN UL10"/>
    <property type="match status" value="1"/>
</dbReference>
<dbReference type="Pfam" id="PF00428">
    <property type="entry name" value="Ribosomal_60s"/>
    <property type="match status" value="1"/>
</dbReference>
<dbReference type="Pfam" id="PF00466">
    <property type="entry name" value="Ribosomal_L10"/>
    <property type="match status" value="1"/>
</dbReference>
<dbReference type="Pfam" id="PF17777">
    <property type="entry name" value="RL10P_insert"/>
    <property type="match status" value="1"/>
</dbReference>
<dbReference type="PIRSF" id="PIRSF039087">
    <property type="entry name" value="L10E"/>
    <property type="match status" value="1"/>
</dbReference>
<dbReference type="SUPFAM" id="SSF160369">
    <property type="entry name" value="Ribosomal protein L10-like"/>
    <property type="match status" value="1"/>
</dbReference>
<reference key="1">
    <citation type="journal article" date="1989" name="Mol. Cell. Biol.">
        <title>Antibody to a human DNA repair protein allows for cloning of a Drosophila cDNA that encodes an apurinic endonuclease.</title>
        <authorList>
            <person name="Kelley M.R."/>
            <person name="Venugopal S."/>
            <person name="Harless J."/>
            <person name="Deutsch W.A."/>
        </authorList>
    </citation>
    <scope>NUCLEOTIDE SEQUENCE [MRNA]</scope>
</reference>
<reference key="2">
    <citation type="journal article" date="2000" name="Science">
        <title>The genome sequence of Drosophila melanogaster.</title>
        <authorList>
            <person name="Adams M.D."/>
            <person name="Celniker S.E."/>
            <person name="Holt R.A."/>
            <person name="Evans C.A."/>
            <person name="Gocayne J.D."/>
            <person name="Amanatides P.G."/>
            <person name="Scherer S.E."/>
            <person name="Li P.W."/>
            <person name="Hoskins R.A."/>
            <person name="Galle R.F."/>
            <person name="George R.A."/>
            <person name="Lewis S.E."/>
            <person name="Richards S."/>
            <person name="Ashburner M."/>
            <person name="Henderson S.N."/>
            <person name="Sutton G.G."/>
            <person name="Wortman J.R."/>
            <person name="Yandell M.D."/>
            <person name="Zhang Q."/>
            <person name="Chen L.X."/>
            <person name="Brandon R.C."/>
            <person name="Rogers Y.-H.C."/>
            <person name="Blazej R.G."/>
            <person name="Champe M."/>
            <person name="Pfeiffer B.D."/>
            <person name="Wan K.H."/>
            <person name="Doyle C."/>
            <person name="Baxter E.G."/>
            <person name="Helt G."/>
            <person name="Nelson C.R."/>
            <person name="Miklos G.L.G."/>
            <person name="Abril J.F."/>
            <person name="Agbayani A."/>
            <person name="An H.-J."/>
            <person name="Andrews-Pfannkoch C."/>
            <person name="Baldwin D."/>
            <person name="Ballew R.M."/>
            <person name="Basu A."/>
            <person name="Baxendale J."/>
            <person name="Bayraktaroglu L."/>
            <person name="Beasley E.M."/>
            <person name="Beeson K.Y."/>
            <person name="Benos P.V."/>
            <person name="Berman B.P."/>
            <person name="Bhandari D."/>
            <person name="Bolshakov S."/>
            <person name="Borkova D."/>
            <person name="Botchan M.R."/>
            <person name="Bouck J."/>
            <person name="Brokstein P."/>
            <person name="Brottier P."/>
            <person name="Burtis K.C."/>
            <person name="Busam D.A."/>
            <person name="Butler H."/>
            <person name="Cadieu E."/>
            <person name="Center A."/>
            <person name="Chandra I."/>
            <person name="Cherry J.M."/>
            <person name="Cawley S."/>
            <person name="Dahlke C."/>
            <person name="Davenport L.B."/>
            <person name="Davies P."/>
            <person name="de Pablos B."/>
            <person name="Delcher A."/>
            <person name="Deng Z."/>
            <person name="Mays A.D."/>
            <person name="Dew I."/>
            <person name="Dietz S.M."/>
            <person name="Dodson K."/>
            <person name="Doup L.E."/>
            <person name="Downes M."/>
            <person name="Dugan-Rocha S."/>
            <person name="Dunkov B.C."/>
            <person name="Dunn P."/>
            <person name="Durbin K.J."/>
            <person name="Evangelista C.C."/>
            <person name="Ferraz C."/>
            <person name="Ferriera S."/>
            <person name="Fleischmann W."/>
            <person name="Fosler C."/>
            <person name="Gabrielian A.E."/>
            <person name="Garg N.S."/>
            <person name="Gelbart W.M."/>
            <person name="Glasser K."/>
            <person name="Glodek A."/>
            <person name="Gong F."/>
            <person name="Gorrell J.H."/>
            <person name="Gu Z."/>
            <person name="Guan P."/>
            <person name="Harris M."/>
            <person name="Harris N.L."/>
            <person name="Harvey D.A."/>
            <person name="Heiman T.J."/>
            <person name="Hernandez J.R."/>
            <person name="Houck J."/>
            <person name="Hostin D."/>
            <person name="Houston K.A."/>
            <person name="Howland T.J."/>
            <person name="Wei M.-H."/>
            <person name="Ibegwam C."/>
            <person name="Jalali M."/>
            <person name="Kalush F."/>
            <person name="Karpen G.H."/>
            <person name="Ke Z."/>
            <person name="Kennison J.A."/>
            <person name="Ketchum K.A."/>
            <person name="Kimmel B.E."/>
            <person name="Kodira C.D."/>
            <person name="Kraft C.L."/>
            <person name="Kravitz S."/>
            <person name="Kulp D."/>
            <person name="Lai Z."/>
            <person name="Lasko P."/>
            <person name="Lei Y."/>
            <person name="Levitsky A.A."/>
            <person name="Li J.H."/>
            <person name="Li Z."/>
            <person name="Liang Y."/>
            <person name="Lin X."/>
            <person name="Liu X."/>
            <person name="Mattei B."/>
            <person name="McIntosh T.C."/>
            <person name="McLeod M.P."/>
            <person name="McPherson D."/>
            <person name="Merkulov G."/>
            <person name="Milshina N.V."/>
            <person name="Mobarry C."/>
            <person name="Morris J."/>
            <person name="Moshrefi A."/>
            <person name="Mount S.M."/>
            <person name="Moy M."/>
            <person name="Murphy B."/>
            <person name="Murphy L."/>
            <person name="Muzny D.M."/>
            <person name="Nelson D.L."/>
            <person name="Nelson D.R."/>
            <person name="Nelson K.A."/>
            <person name="Nixon K."/>
            <person name="Nusskern D.R."/>
            <person name="Pacleb J.M."/>
            <person name="Palazzolo M."/>
            <person name="Pittman G.S."/>
            <person name="Pan S."/>
            <person name="Pollard J."/>
            <person name="Puri V."/>
            <person name="Reese M.G."/>
            <person name="Reinert K."/>
            <person name="Remington K."/>
            <person name="Saunders R.D.C."/>
            <person name="Scheeler F."/>
            <person name="Shen H."/>
            <person name="Shue B.C."/>
            <person name="Siden-Kiamos I."/>
            <person name="Simpson M."/>
            <person name="Skupski M.P."/>
            <person name="Smith T.J."/>
            <person name="Spier E."/>
            <person name="Spradling A.C."/>
            <person name="Stapleton M."/>
            <person name="Strong R."/>
            <person name="Sun E."/>
            <person name="Svirskas R."/>
            <person name="Tector C."/>
            <person name="Turner R."/>
            <person name="Venter E."/>
            <person name="Wang A.H."/>
            <person name="Wang X."/>
            <person name="Wang Z.-Y."/>
            <person name="Wassarman D.A."/>
            <person name="Weinstock G.M."/>
            <person name="Weissenbach J."/>
            <person name="Williams S.M."/>
            <person name="Woodage T."/>
            <person name="Worley K.C."/>
            <person name="Wu D."/>
            <person name="Yang S."/>
            <person name="Yao Q.A."/>
            <person name="Ye J."/>
            <person name="Yeh R.-F."/>
            <person name="Zaveri J.S."/>
            <person name="Zhan M."/>
            <person name="Zhang G."/>
            <person name="Zhao Q."/>
            <person name="Zheng L."/>
            <person name="Zheng X.H."/>
            <person name="Zhong F.N."/>
            <person name="Zhong W."/>
            <person name="Zhou X."/>
            <person name="Zhu S.C."/>
            <person name="Zhu X."/>
            <person name="Smith H.O."/>
            <person name="Gibbs R.A."/>
            <person name="Myers E.W."/>
            <person name="Rubin G.M."/>
            <person name="Venter J.C."/>
        </authorList>
    </citation>
    <scope>NUCLEOTIDE SEQUENCE [LARGE SCALE GENOMIC DNA]</scope>
    <source>
        <strain>Berkeley</strain>
    </source>
</reference>
<reference key="3">
    <citation type="journal article" date="2002" name="Genome Biol.">
        <title>Annotation of the Drosophila melanogaster euchromatic genome: a systematic review.</title>
        <authorList>
            <person name="Misra S."/>
            <person name="Crosby M.A."/>
            <person name="Mungall C.J."/>
            <person name="Matthews B.B."/>
            <person name="Campbell K.S."/>
            <person name="Hradecky P."/>
            <person name="Huang Y."/>
            <person name="Kaminker J.S."/>
            <person name="Millburn G.H."/>
            <person name="Prochnik S.E."/>
            <person name="Smith C.D."/>
            <person name="Tupy J.L."/>
            <person name="Whitfield E.J."/>
            <person name="Bayraktaroglu L."/>
            <person name="Berman B.P."/>
            <person name="Bettencourt B.R."/>
            <person name="Celniker S.E."/>
            <person name="de Grey A.D.N.J."/>
            <person name="Drysdale R.A."/>
            <person name="Harris N.L."/>
            <person name="Richter J."/>
            <person name="Russo S."/>
            <person name="Schroeder A.J."/>
            <person name="Shu S.Q."/>
            <person name="Stapleton M."/>
            <person name="Yamada C."/>
            <person name="Ashburner M."/>
            <person name="Gelbart W.M."/>
            <person name="Rubin G.M."/>
            <person name="Lewis S.E."/>
        </authorList>
    </citation>
    <scope>GENOME REANNOTATION</scope>
    <source>
        <strain>Berkeley</strain>
    </source>
</reference>
<reference key="4">
    <citation type="journal article" date="2002" name="Genome Biol.">
        <title>A Drosophila full-length cDNA resource.</title>
        <authorList>
            <person name="Stapleton M."/>
            <person name="Carlson J.W."/>
            <person name="Brokstein P."/>
            <person name="Yu C."/>
            <person name="Champe M."/>
            <person name="George R.A."/>
            <person name="Guarin H."/>
            <person name="Kronmiller B."/>
            <person name="Pacleb J.M."/>
            <person name="Park S."/>
            <person name="Wan K.H."/>
            <person name="Rubin G.M."/>
            <person name="Celniker S.E."/>
        </authorList>
    </citation>
    <scope>NUCLEOTIDE SEQUENCE [LARGE SCALE MRNA]</scope>
    <source>
        <strain>Berkeley</strain>
        <tissue>Embryo</tissue>
    </source>
</reference>
<reference key="5">
    <citation type="submission" date="2005-03" db="EMBL/GenBank/DDBJ databases">
        <authorList>
            <person name="Stapleton M."/>
            <person name="Carlson J.W."/>
            <person name="Chavez C."/>
            <person name="Frise E."/>
            <person name="George R.A."/>
            <person name="Pacleb J.M."/>
            <person name="Park S."/>
            <person name="Wan K.H."/>
            <person name="Yu C."/>
            <person name="Rubin G.M."/>
            <person name="Celniker S.E."/>
        </authorList>
    </citation>
    <scope>NUCLEOTIDE SEQUENCE [LARGE SCALE MRNA]</scope>
    <source>
        <strain>Berkeley</strain>
        <tissue>Head</tissue>
    </source>
</reference>
<reference key="6">
    <citation type="journal article" date="1991" name="Nucleic Acids Res.">
        <title>Drosophila AP3, a presumptive DNA repair protein, is homologous to human ribosomal associated protein P0.</title>
        <authorList>
            <person name="Grabowski D.T."/>
            <person name="Deutsch W.A."/>
            <person name="Derda D."/>
            <person name="Kelley M.R."/>
        </authorList>
    </citation>
    <scope>SIMILARITY TO RIBOSOMAL PROTEIN P0</scope>
</reference>
<reference key="7">
    <citation type="journal article" date="1996" name="Nucleic Acids Res.">
        <title>Drosophila ribosomal protein PO contains apurinic/apyrimidinic endonuclease activity.</title>
        <authorList>
            <person name="Yacoub A."/>
            <person name="Kelley M.R."/>
            <person name="Deutsch W.A."/>
        </authorList>
    </citation>
    <scope>DNA REPAIR ACTIVITY</scope>
    <scope>CATALYTIC ACTIVITY</scope>
</reference>
<reference key="8">
    <citation type="journal article" date="2008" name="J. Proteome Res.">
        <title>Phosphoproteome analysis of Drosophila melanogaster embryos.</title>
        <authorList>
            <person name="Zhai B."/>
            <person name="Villen J."/>
            <person name="Beausoleil S.A."/>
            <person name="Mintseris J."/>
            <person name="Gygi S.P."/>
        </authorList>
    </citation>
    <scope>PHOSPHORYLATION [LARGE SCALE ANALYSIS] AT SER-302 AND SER-304</scope>
    <scope>IDENTIFICATION BY MASS SPECTROMETRY</scope>
    <source>
        <tissue>Embryo</tissue>
    </source>
</reference>
<name>RLA0_DROME</name>
<evidence type="ECO:0000250" key="1"/>
<evidence type="ECO:0000255" key="2"/>
<evidence type="ECO:0000256" key="3">
    <source>
        <dbReference type="SAM" id="MobiDB-lite"/>
    </source>
</evidence>
<evidence type="ECO:0000269" key="4">
    <source>
    </source>
</evidence>
<evidence type="ECO:0000269" key="5">
    <source>
    </source>
</evidence>
<evidence type="ECO:0000305" key="6"/>
<accession>P19889</accession>
<accession>Q5BHX7</accession>
<accession>Q9VNV9</accession>
<keyword id="KW-0963">Cytoplasm</keyword>
<keyword id="KW-0227">DNA damage</keyword>
<keyword id="KW-0234">DNA repair</keyword>
<keyword id="KW-0378">Hydrolase</keyword>
<keyword id="KW-0539">Nucleus</keyword>
<keyword id="KW-0597">Phosphoprotein</keyword>
<keyword id="KW-1185">Reference proteome</keyword>
<keyword id="KW-0687">Ribonucleoprotein</keyword>
<keyword id="KW-0689">Ribosomal protein</keyword>
<protein>
    <recommendedName>
        <fullName evidence="6">Large ribosomal subunit protein uL10</fullName>
    </recommendedName>
    <alternativeName>
        <fullName>60S acidic ribosomal protein P0</fullName>
    </alternativeName>
    <alternativeName>
        <fullName>Apurinic-apyrimidinic endonuclease</fullName>
        <ecNumber evidence="5">3.1.-.-</ecNumber>
    </alternativeName>
</protein>
<feature type="chain" id="PRO_0000154769" description="Large ribosomal subunit protein uL10">
    <location>
        <begin position="1"/>
        <end position="317"/>
    </location>
</feature>
<feature type="region of interest" description="Disordered" evidence="3">
    <location>
        <begin position="280"/>
        <end position="317"/>
    </location>
</feature>
<feature type="compositionally biased region" description="Low complexity" evidence="3">
    <location>
        <begin position="280"/>
        <end position="290"/>
    </location>
</feature>
<feature type="compositionally biased region" description="Basic and acidic residues" evidence="3">
    <location>
        <begin position="291"/>
        <end position="302"/>
    </location>
</feature>
<feature type="modified residue" description="Phosphoserine" evidence="4">
    <location>
        <position position="302"/>
    </location>
</feature>
<feature type="modified residue" description="Phosphoserine; by CK1" evidence="2">
    <location>
        <position position="304"/>
    </location>
</feature>
<comment type="function">
    <text>Ribosomal protein P0 is the functional equivalent of E.coli protein L10.</text>
</comment>
<comment type="subunit">
    <text evidence="1">P0 forms a pentameric complex by interaction with dimers of P1 and P2.</text>
</comment>
<comment type="interaction">
    <interactant intactId="EBI-195497">
        <id>P19889</id>
    </interactant>
    <interactant intactId="EBI-125901">
        <id>P08570</id>
        <label>RpLP1</label>
    </interactant>
    <organismsDiffer>false</organismsDiffer>
    <experiments>4</experiments>
</comment>
<comment type="subcellular location">
    <subcellularLocation>
        <location>Cytoplasm</location>
    </subcellularLocation>
    <subcellularLocation>
        <location>Nucleus</location>
    </subcellularLocation>
</comment>
<comment type="developmental stage">
    <text>All stages of development. A larger transcript is restricted to the embryonic and early larval stages.</text>
</comment>
<comment type="similarity">
    <text evidence="6">Belongs to the universal ribosomal protein uL10 family.</text>
</comment>
<organism>
    <name type="scientific">Drosophila melanogaster</name>
    <name type="common">Fruit fly</name>
    <dbReference type="NCBI Taxonomy" id="7227"/>
    <lineage>
        <taxon>Eukaryota</taxon>
        <taxon>Metazoa</taxon>
        <taxon>Ecdysozoa</taxon>
        <taxon>Arthropoda</taxon>
        <taxon>Hexapoda</taxon>
        <taxon>Insecta</taxon>
        <taxon>Pterygota</taxon>
        <taxon>Neoptera</taxon>
        <taxon>Endopterygota</taxon>
        <taxon>Diptera</taxon>
        <taxon>Brachycera</taxon>
        <taxon>Muscomorpha</taxon>
        <taxon>Ephydroidea</taxon>
        <taxon>Drosophilidae</taxon>
        <taxon>Drosophila</taxon>
        <taxon>Sophophora</taxon>
    </lineage>
</organism>
<sequence>MVRENKAAWKAQYFIKVVELFDEFPKCFIVGADNVGSKQMQNIRTSLRGLAVVLMGKNTMMRKAIRGHLENNPQLEKLLPHIKGNVGFVFTKGDLAEVRDKLLESKVRAPARPGAIAPLHVIIPAQNTGLGPEKTSFFQALSIPTKISKGTIEIINDVPILKPGDKVGASEATLLNMLNISPFSYGLIVNQVYDSGSIFSPEILDIKPEDLRAKFQQGVANLAAVCLSVGYPTIASAPHSIANGFKNLLAIAATTEVEFKEATTIKEYIKDPSKFAAAASASAAPAAGGATEKKEEAKKPESESEEEDDDMGFGLFD</sequence>